<accession>A9AGH3</accession>
<sequence length="213" mass="22469">MDILWDISPPISAATPVWPGDTPVSVERVWRIEAGSPVNVARLTLSPHTGAHCDAPLHYDADGAAIGAVPLDTYVGPCRVIHCIGASPVVRPADVAAALDGVPPRVLLRTYANAPTAHWDSAFCAVAPDTVDLLAAHGVKLIGIDTPSLDPQESKTMDAHHRVHAHRMAILEGIVLDEVPPGDYELIALPLKFATLDASPVRAVLRALPARAA</sequence>
<reference key="1">
    <citation type="submission" date="2007-10" db="EMBL/GenBank/DDBJ databases">
        <title>Complete sequence of chromosome 1 of Burkholderia multivorans ATCC 17616.</title>
        <authorList>
            <person name="Copeland A."/>
            <person name="Lucas S."/>
            <person name="Lapidus A."/>
            <person name="Barry K."/>
            <person name="Glavina del Rio T."/>
            <person name="Dalin E."/>
            <person name="Tice H."/>
            <person name="Pitluck S."/>
            <person name="Chain P."/>
            <person name="Malfatti S."/>
            <person name="Shin M."/>
            <person name="Vergez L."/>
            <person name="Schmutz J."/>
            <person name="Larimer F."/>
            <person name="Land M."/>
            <person name="Hauser L."/>
            <person name="Kyrpides N."/>
            <person name="Kim E."/>
            <person name="Tiedje J."/>
            <person name="Richardson P."/>
        </authorList>
    </citation>
    <scope>NUCLEOTIDE SEQUENCE [LARGE SCALE GENOMIC DNA]</scope>
    <source>
        <strain>ATCC 17616 / 249</strain>
    </source>
</reference>
<reference key="2">
    <citation type="submission" date="2007-04" db="EMBL/GenBank/DDBJ databases">
        <title>Complete genome sequence of Burkholderia multivorans ATCC 17616.</title>
        <authorList>
            <person name="Ohtsubo Y."/>
            <person name="Yamashita A."/>
            <person name="Kurokawa K."/>
            <person name="Takami H."/>
            <person name="Yuhara S."/>
            <person name="Nishiyama E."/>
            <person name="Endo R."/>
            <person name="Miyazaki R."/>
            <person name="Ono A."/>
            <person name="Yano K."/>
            <person name="Ito M."/>
            <person name="Sota M."/>
            <person name="Yuji N."/>
            <person name="Hattori M."/>
            <person name="Tsuda M."/>
        </authorList>
    </citation>
    <scope>NUCLEOTIDE SEQUENCE [LARGE SCALE GENOMIC DNA]</scope>
    <source>
        <strain>ATCC 17616 / 249</strain>
    </source>
</reference>
<gene>
    <name evidence="1" type="primary">kynB</name>
    <name type="ordered locus">Bmul_0720</name>
    <name type="ordered locus">BMULJ_02540</name>
</gene>
<dbReference type="EC" id="3.5.1.9" evidence="1"/>
<dbReference type="EMBL" id="CP000868">
    <property type="protein sequence ID" value="ABX14415.1"/>
    <property type="molecule type" value="Genomic_DNA"/>
</dbReference>
<dbReference type="EMBL" id="AP009385">
    <property type="protein sequence ID" value="BAG44431.1"/>
    <property type="molecule type" value="Genomic_DNA"/>
</dbReference>
<dbReference type="RefSeq" id="WP_012212823.1">
    <property type="nucleotide sequence ID" value="NC_010084.1"/>
</dbReference>
<dbReference type="SMR" id="A9AGH3"/>
<dbReference type="STRING" id="395019.BMULJ_02540"/>
<dbReference type="KEGG" id="bmj:BMULJ_02540"/>
<dbReference type="KEGG" id="bmu:Bmul_0720"/>
<dbReference type="eggNOG" id="COG1878">
    <property type="taxonomic scope" value="Bacteria"/>
</dbReference>
<dbReference type="HOGENOM" id="CLU_030671_3_1_4"/>
<dbReference type="UniPathway" id="UPA00333">
    <property type="reaction ID" value="UER00454"/>
</dbReference>
<dbReference type="Proteomes" id="UP000008815">
    <property type="component" value="Chromosome 1"/>
</dbReference>
<dbReference type="GO" id="GO:0004061">
    <property type="term" value="F:arylformamidase activity"/>
    <property type="evidence" value="ECO:0000250"/>
    <property type="project" value="UniProtKB"/>
</dbReference>
<dbReference type="GO" id="GO:0004328">
    <property type="term" value="F:formamidase activity"/>
    <property type="evidence" value="ECO:0007669"/>
    <property type="project" value="InterPro"/>
</dbReference>
<dbReference type="GO" id="GO:0008270">
    <property type="term" value="F:zinc ion binding"/>
    <property type="evidence" value="ECO:0007669"/>
    <property type="project" value="UniProtKB-UniRule"/>
</dbReference>
<dbReference type="GO" id="GO:0043420">
    <property type="term" value="P:anthranilate metabolic process"/>
    <property type="evidence" value="ECO:0000250"/>
    <property type="project" value="UniProtKB"/>
</dbReference>
<dbReference type="GO" id="GO:0019441">
    <property type="term" value="P:L-tryptophan catabolic process to kynurenine"/>
    <property type="evidence" value="ECO:0000250"/>
    <property type="project" value="UniProtKB"/>
</dbReference>
<dbReference type="FunFam" id="3.50.30.50:FF:000001">
    <property type="entry name" value="Kynurenine formamidase"/>
    <property type="match status" value="1"/>
</dbReference>
<dbReference type="Gene3D" id="3.50.30.50">
    <property type="entry name" value="Putative cyclase"/>
    <property type="match status" value="1"/>
</dbReference>
<dbReference type="HAMAP" id="MF_01969">
    <property type="entry name" value="KynB"/>
    <property type="match status" value="1"/>
</dbReference>
<dbReference type="InterPro" id="IPR007325">
    <property type="entry name" value="KFase/CYL"/>
</dbReference>
<dbReference type="InterPro" id="IPR037175">
    <property type="entry name" value="KFase_sf"/>
</dbReference>
<dbReference type="InterPro" id="IPR017484">
    <property type="entry name" value="Kynurenine_formamidase_bac"/>
</dbReference>
<dbReference type="NCBIfam" id="TIGR03035">
    <property type="entry name" value="trp_arylform"/>
    <property type="match status" value="1"/>
</dbReference>
<dbReference type="PANTHER" id="PTHR31118">
    <property type="entry name" value="CYCLASE-LIKE PROTEIN 2"/>
    <property type="match status" value="1"/>
</dbReference>
<dbReference type="PANTHER" id="PTHR31118:SF32">
    <property type="entry name" value="KYNURENINE FORMAMIDASE"/>
    <property type="match status" value="1"/>
</dbReference>
<dbReference type="Pfam" id="PF04199">
    <property type="entry name" value="Cyclase"/>
    <property type="match status" value="1"/>
</dbReference>
<dbReference type="SUPFAM" id="SSF102198">
    <property type="entry name" value="Putative cyclase"/>
    <property type="match status" value="1"/>
</dbReference>
<protein>
    <recommendedName>
        <fullName evidence="1">Kynurenine formamidase</fullName>
        <shortName evidence="1">KFA</shortName>
        <shortName evidence="1">KFase</shortName>
        <ecNumber evidence="1">3.5.1.9</ecNumber>
    </recommendedName>
    <alternativeName>
        <fullName evidence="1">Arylformamidase</fullName>
    </alternativeName>
    <alternativeName>
        <fullName evidence="1">N-formylkynurenine formamidase</fullName>
        <shortName evidence="1">FKF</shortName>
    </alternativeName>
</protein>
<comment type="function">
    <text evidence="1">Catalyzes the hydrolysis of N-formyl-L-kynurenine to L-kynurenine, the second step in the kynurenine pathway of tryptophan degradation.</text>
</comment>
<comment type="catalytic activity">
    <reaction evidence="1">
        <text>N-formyl-L-kynurenine + H2O = L-kynurenine + formate + H(+)</text>
        <dbReference type="Rhea" id="RHEA:13009"/>
        <dbReference type="ChEBI" id="CHEBI:15377"/>
        <dbReference type="ChEBI" id="CHEBI:15378"/>
        <dbReference type="ChEBI" id="CHEBI:15740"/>
        <dbReference type="ChEBI" id="CHEBI:57959"/>
        <dbReference type="ChEBI" id="CHEBI:58629"/>
        <dbReference type="EC" id="3.5.1.9"/>
    </reaction>
</comment>
<comment type="cofactor">
    <cofactor evidence="1">
        <name>Zn(2+)</name>
        <dbReference type="ChEBI" id="CHEBI:29105"/>
    </cofactor>
    <text evidence="1">Binds 2 zinc ions per subunit.</text>
</comment>
<comment type="pathway">
    <text evidence="1">Amino-acid degradation; L-tryptophan degradation via kynurenine pathway; L-kynurenine from L-tryptophan: step 2/2.</text>
</comment>
<comment type="subunit">
    <text evidence="1">Homodimer.</text>
</comment>
<comment type="similarity">
    <text evidence="1">Belongs to the Cyclase 1 superfamily. KynB family.</text>
</comment>
<organism>
    <name type="scientific">Burkholderia multivorans (strain ATCC 17616 / 249)</name>
    <dbReference type="NCBI Taxonomy" id="395019"/>
    <lineage>
        <taxon>Bacteria</taxon>
        <taxon>Pseudomonadati</taxon>
        <taxon>Pseudomonadota</taxon>
        <taxon>Betaproteobacteria</taxon>
        <taxon>Burkholderiales</taxon>
        <taxon>Burkholderiaceae</taxon>
        <taxon>Burkholderia</taxon>
        <taxon>Burkholderia cepacia complex</taxon>
    </lineage>
</organism>
<name>KYNB_BURM1</name>
<evidence type="ECO:0000255" key="1">
    <source>
        <dbReference type="HAMAP-Rule" id="MF_01969"/>
    </source>
</evidence>
<keyword id="KW-0378">Hydrolase</keyword>
<keyword id="KW-0479">Metal-binding</keyword>
<keyword id="KW-1185">Reference proteome</keyword>
<keyword id="KW-0823">Tryptophan catabolism</keyword>
<keyword id="KW-0862">Zinc</keyword>
<feature type="chain" id="PRO_0000362105" description="Kynurenine formamidase">
    <location>
        <begin position="1"/>
        <end position="213"/>
    </location>
</feature>
<feature type="active site" description="Proton donor/acceptor" evidence="1">
    <location>
        <position position="58"/>
    </location>
</feature>
<feature type="binding site" evidence="1">
    <location>
        <position position="18"/>
    </location>
    <ligand>
        <name>substrate</name>
    </ligand>
</feature>
<feature type="binding site" evidence="1">
    <location>
        <position position="48"/>
    </location>
    <ligand>
        <name>Zn(2+)</name>
        <dbReference type="ChEBI" id="CHEBI:29105"/>
        <label>1</label>
    </ligand>
</feature>
<feature type="binding site" evidence="1">
    <location>
        <position position="52"/>
    </location>
    <ligand>
        <name>Zn(2+)</name>
        <dbReference type="ChEBI" id="CHEBI:29105"/>
        <label>1</label>
    </ligand>
</feature>
<feature type="binding site" evidence="1">
    <location>
        <position position="54"/>
    </location>
    <ligand>
        <name>Zn(2+)</name>
        <dbReference type="ChEBI" id="CHEBI:29105"/>
        <label>1</label>
    </ligand>
</feature>
<feature type="binding site" evidence="1">
    <location>
        <position position="54"/>
    </location>
    <ligand>
        <name>Zn(2+)</name>
        <dbReference type="ChEBI" id="CHEBI:29105"/>
        <label>2</label>
    </ligand>
</feature>
<feature type="binding site" evidence="1">
    <location>
        <position position="160"/>
    </location>
    <ligand>
        <name>Zn(2+)</name>
        <dbReference type="ChEBI" id="CHEBI:29105"/>
        <label>2</label>
    </ligand>
</feature>
<feature type="binding site" evidence="1">
    <location>
        <position position="172"/>
    </location>
    <ligand>
        <name>Zn(2+)</name>
        <dbReference type="ChEBI" id="CHEBI:29105"/>
        <label>1</label>
    </ligand>
</feature>
<feature type="binding site" evidence="1">
    <location>
        <position position="172"/>
    </location>
    <ligand>
        <name>Zn(2+)</name>
        <dbReference type="ChEBI" id="CHEBI:29105"/>
        <label>2</label>
    </ligand>
</feature>
<proteinExistence type="inferred from homology"/>